<comment type="function">
    <text evidence="5">Catalyzes the first committed step of 'de novo' purine biosynthesis from glutamine.</text>
</comment>
<comment type="catalytic activity">
    <reaction evidence="5">
        <text>5-phospho-beta-D-ribosylamine + L-glutamate + diphosphate = 5-phospho-alpha-D-ribose 1-diphosphate + L-glutamine + H2O</text>
        <dbReference type="Rhea" id="RHEA:14905"/>
        <dbReference type="ChEBI" id="CHEBI:15377"/>
        <dbReference type="ChEBI" id="CHEBI:29985"/>
        <dbReference type="ChEBI" id="CHEBI:33019"/>
        <dbReference type="ChEBI" id="CHEBI:58017"/>
        <dbReference type="ChEBI" id="CHEBI:58359"/>
        <dbReference type="ChEBI" id="CHEBI:58681"/>
        <dbReference type="EC" id="2.4.2.14"/>
    </reaction>
</comment>
<comment type="cofactor">
    <cofactor evidence="1">
        <name>[4Fe-4S] cluster</name>
        <dbReference type="ChEBI" id="CHEBI:49883"/>
    </cofactor>
    <text evidence="1">Binds 1 [4Fe-4S] cluster per subunit.</text>
</comment>
<comment type="cofactor">
    <cofactor evidence="1">
        <name>Mg(2+)</name>
        <dbReference type="ChEBI" id="CHEBI:18420"/>
    </cofactor>
    <text evidence="1">Binds 1 Mg(2+) ion per subunit.</text>
</comment>
<comment type="activity regulation">
    <text evidence="5">Inhibited by the phenyltriazole acetic acid compound [5-(4-chlorophenyl)-1-isopropyl-1H-[1,2,4]triazol-3-yl]-acetic acid (DAS734), a bleaching herbicide. Repressed by AMP, ADP, ATP and GTP, and slightly by GMP.</text>
</comment>
<comment type="pathway">
    <text>Purine metabolism; IMP biosynthesis via de novo pathway; N(1)-(5-phospho-D-ribosyl)glycinamide from 5-phospho-alpha-D-ribose 1-diphosphate: step 1/2.</text>
</comment>
<comment type="subcellular location">
    <subcellularLocation>
        <location evidence="1">Plastid</location>
        <location evidence="1">Chloroplast stroma</location>
    </subcellularLocation>
</comment>
<comment type="tissue specificity">
    <text evidence="4">Mostly expressed at low levels in leaves, and, to a lower extent, in cotyledons.</text>
</comment>
<comment type="similarity">
    <text evidence="6">In the C-terminal section; belongs to the purine/pyrimidine phosphoribosyltransferase family.</text>
</comment>
<feature type="transit peptide" description="Chloroplast" evidence="2">
    <location>
        <begin position="1"/>
        <end position="59"/>
    </location>
</feature>
<feature type="chain" id="PRO_0000420283" description="Amidophosphoribosyltransferase 3, chloroplastic">
    <location>
        <begin position="60"/>
        <end position="532"/>
    </location>
</feature>
<feature type="domain" description="Glutamine amidotransferase type-2" evidence="3">
    <location>
        <begin position="77"/>
        <end position="296"/>
    </location>
</feature>
<feature type="active site" description="Nucleophile" evidence="3">
    <location>
        <position position="77"/>
    </location>
</feature>
<feature type="binding site" evidence="1">
    <location>
        <position position="313"/>
    </location>
    <ligand>
        <name>[4Fe-4S] cluster</name>
        <dbReference type="ChEBI" id="CHEBI:49883"/>
    </ligand>
</feature>
<feature type="binding site" evidence="1">
    <location>
        <position position="459"/>
    </location>
    <ligand>
        <name>[4Fe-4S] cluster</name>
        <dbReference type="ChEBI" id="CHEBI:49883"/>
    </ligand>
</feature>
<feature type="binding site" evidence="1">
    <location>
        <position position="511"/>
    </location>
    <ligand>
        <name>[4Fe-4S] cluster</name>
        <dbReference type="ChEBI" id="CHEBI:49883"/>
    </ligand>
</feature>
<feature type="binding site" evidence="1">
    <location>
        <position position="514"/>
    </location>
    <ligand>
        <name>[4Fe-4S] cluster</name>
        <dbReference type="ChEBI" id="CHEBI:49883"/>
    </ligand>
</feature>
<organism>
    <name type="scientific">Arabidopsis thaliana</name>
    <name type="common">Mouse-ear cress</name>
    <dbReference type="NCBI Taxonomy" id="3702"/>
    <lineage>
        <taxon>Eukaryota</taxon>
        <taxon>Viridiplantae</taxon>
        <taxon>Streptophyta</taxon>
        <taxon>Embryophyta</taxon>
        <taxon>Tracheophyta</taxon>
        <taxon>Spermatophyta</taxon>
        <taxon>Magnoliopsida</taxon>
        <taxon>eudicotyledons</taxon>
        <taxon>Gunneridae</taxon>
        <taxon>Pentapetalae</taxon>
        <taxon>rosids</taxon>
        <taxon>malvids</taxon>
        <taxon>Brassicales</taxon>
        <taxon>Brassicaceae</taxon>
        <taxon>Camelineae</taxon>
        <taxon>Arabidopsis</taxon>
    </lineage>
</organism>
<name>ASE3_ARATH</name>
<protein>
    <recommendedName>
        <fullName>Amidophosphoribosyltransferase 3, chloroplastic</fullName>
        <shortName>AtATase3</shortName>
        <shortName>PRPP3</shortName>
        <ecNumber>2.4.2.14</ecNumber>
    </recommendedName>
    <alternativeName>
        <fullName>Glutamine phosphoribosylpyrophosphate amidotransferase 3</fullName>
        <shortName>AtGPRAT3</shortName>
    </alternativeName>
</protein>
<proteinExistence type="evidence at protein level"/>
<sequence>MAFSVEEISSILPNSLSANPRNVSQNTISPSFFKPSLKPYASKTLISLSCRRSLSPVFSAGTYVTNVDEDDKLHEECGVVGIHGDPEASRLSYLALHALQHRGQEGAGIVAANQNGLESITGVGLVSDVFTESKLNNLPGDIAIGHVRYSTSGASMLKNVQPFIASCKLGSLAVAHNGNFVNYKQLKTKLEEMGSIFITSSDTELVLHLIAKSKAKTFLLRVIDACEKLRGAYSMVFVFEDKLIAVRDPFGFRPLVMGRRSNGAVVFASETCALDLIDATYEREVCPGEIVVVDRNHGDSSMFMISHPEQKQCVFEHGYFSQPNSIVFGRSVYETRRMYGEILATVAPVDCDVVIAVPDSGTVAALGYAAKAGVPFQIGLLRSHYAKRTFIEPTQEIRDFAVKVKLSPVRAVLEGKRVVVVDDSIVRGTTSLKIVRMLRDAGAKEVHMRIALPPMIASCYYGVDTPRSQELISSKMSVEAIQKHINCDSLAFLPLDSLKGVYGPVESHRYCYACFTGKYPVTKTESEEADAS</sequence>
<evidence type="ECO:0000250" key="1"/>
<evidence type="ECO:0000255" key="2"/>
<evidence type="ECO:0000255" key="3">
    <source>
        <dbReference type="PROSITE-ProRule" id="PRU00609"/>
    </source>
</evidence>
<evidence type="ECO:0000269" key="4">
    <source>
    </source>
</evidence>
<evidence type="ECO:0000269" key="5">
    <source>
    </source>
</evidence>
<evidence type="ECO:0000305" key="6"/>
<keyword id="KW-0150">Chloroplast</keyword>
<keyword id="KW-0315">Glutamine amidotransferase</keyword>
<keyword id="KW-0328">Glycosyltransferase</keyword>
<keyword id="KW-0408">Iron</keyword>
<keyword id="KW-0411">Iron-sulfur</keyword>
<keyword id="KW-0460">Magnesium</keyword>
<keyword id="KW-0479">Metal-binding</keyword>
<keyword id="KW-0934">Plastid</keyword>
<keyword id="KW-0658">Purine biosynthesis</keyword>
<keyword id="KW-1185">Reference proteome</keyword>
<keyword id="KW-0808">Transferase</keyword>
<keyword id="KW-0809">Transit peptide</keyword>
<accession>Q9T0J5</accession>
<dbReference type="EC" id="2.4.2.14"/>
<dbReference type="EMBL" id="AL035656">
    <property type="protein sequence ID" value="CAB38622.1"/>
    <property type="molecule type" value="Genomic_DNA"/>
</dbReference>
<dbReference type="EMBL" id="AL161594">
    <property type="protein sequence ID" value="CAB80551.1"/>
    <property type="molecule type" value="Genomic_DNA"/>
</dbReference>
<dbReference type="EMBL" id="CP002687">
    <property type="protein sequence ID" value="AEE86986.1"/>
    <property type="molecule type" value="Genomic_DNA"/>
</dbReference>
<dbReference type="PIR" id="T06087">
    <property type="entry name" value="T06087"/>
</dbReference>
<dbReference type="RefSeq" id="NP_195599.1">
    <property type="nucleotide sequence ID" value="NM_120048.1"/>
</dbReference>
<dbReference type="SMR" id="Q9T0J5"/>
<dbReference type="FunCoup" id="Q9T0J5">
    <property type="interactions" value="1893"/>
</dbReference>
<dbReference type="STRING" id="3702.Q9T0J5"/>
<dbReference type="MEROPS" id="C44.A02"/>
<dbReference type="PaxDb" id="3702-AT4G38880.1"/>
<dbReference type="ProteomicsDB" id="246676"/>
<dbReference type="EnsemblPlants" id="AT4G38880.1">
    <property type="protein sequence ID" value="AT4G38880.1"/>
    <property type="gene ID" value="AT4G38880"/>
</dbReference>
<dbReference type="GeneID" id="830043"/>
<dbReference type="Gramene" id="AT4G38880.1">
    <property type="protein sequence ID" value="AT4G38880.1"/>
    <property type="gene ID" value="AT4G38880"/>
</dbReference>
<dbReference type="KEGG" id="ath:AT4G38880"/>
<dbReference type="Araport" id="AT4G38880"/>
<dbReference type="TAIR" id="AT4G38880">
    <property type="gene designation" value="ASE3"/>
</dbReference>
<dbReference type="eggNOG" id="KOG0572">
    <property type="taxonomic scope" value="Eukaryota"/>
</dbReference>
<dbReference type="HOGENOM" id="CLU_022389_3_1_1"/>
<dbReference type="InParanoid" id="Q9T0J5"/>
<dbReference type="OMA" id="WVYYGFP"/>
<dbReference type="OrthoDB" id="191723at2759"/>
<dbReference type="PhylomeDB" id="Q9T0J5"/>
<dbReference type="BioCyc" id="ARA:AT4G38880-MONOMER"/>
<dbReference type="BRENDA" id="2.4.2.14">
    <property type="organism ID" value="399"/>
</dbReference>
<dbReference type="SABIO-RK" id="Q9T0J5"/>
<dbReference type="UniPathway" id="UPA00074">
    <property type="reaction ID" value="UER00124"/>
</dbReference>
<dbReference type="PRO" id="PR:Q9T0J5"/>
<dbReference type="Proteomes" id="UP000006548">
    <property type="component" value="Chromosome 4"/>
</dbReference>
<dbReference type="ExpressionAtlas" id="Q9T0J5">
    <property type="expression patterns" value="baseline and differential"/>
</dbReference>
<dbReference type="GO" id="GO:0009570">
    <property type="term" value="C:chloroplast stroma"/>
    <property type="evidence" value="ECO:0007669"/>
    <property type="project" value="UniProtKB-SubCell"/>
</dbReference>
<dbReference type="GO" id="GO:0004044">
    <property type="term" value="F:amidophosphoribosyltransferase activity"/>
    <property type="evidence" value="ECO:0007669"/>
    <property type="project" value="UniProtKB-EC"/>
</dbReference>
<dbReference type="GO" id="GO:0051536">
    <property type="term" value="F:iron-sulfur cluster binding"/>
    <property type="evidence" value="ECO:0007669"/>
    <property type="project" value="UniProtKB-KW"/>
</dbReference>
<dbReference type="GO" id="GO:0046872">
    <property type="term" value="F:metal ion binding"/>
    <property type="evidence" value="ECO:0007669"/>
    <property type="project" value="UniProtKB-KW"/>
</dbReference>
<dbReference type="GO" id="GO:0006189">
    <property type="term" value="P:'de novo' IMP biosynthetic process"/>
    <property type="evidence" value="ECO:0007669"/>
    <property type="project" value="UniProtKB-UniPathway"/>
</dbReference>
<dbReference type="GO" id="GO:0009113">
    <property type="term" value="P:purine nucleobase biosynthetic process"/>
    <property type="evidence" value="ECO:0007669"/>
    <property type="project" value="InterPro"/>
</dbReference>
<dbReference type="CDD" id="cd00715">
    <property type="entry name" value="GPATase_N"/>
    <property type="match status" value="1"/>
</dbReference>
<dbReference type="CDD" id="cd06223">
    <property type="entry name" value="PRTases_typeI"/>
    <property type="match status" value="1"/>
</dbReference>
<dbReference type="Gene3D" id="3.40.50.2020">
    <property type="match status" value="1"/>
</dbReference>
<dbReference type="Gene3D" id="3.60.20.10">
    <property type="entry name" value="Glutamine Phosphoribosylpyrophosphate, subunit 1, domain 1"/>
    <property type="match status" value="1"/>
</dbReference>
<dbReference type="HAMAP" id="MF_01931">
    <property type="entry name" value="PurF"/>
    <property type="match status" value="1"/>
</dbReference>
<dbReference type="InterPro" id="IPR017932">
    <property type="entry name" value="GATase_2_dom"/>
</dbReference>
<dbReference type="InterPro" id="IPR029055">
    <property type="entry name" value="Ntn_hydrolases_N"/>
</dbReference>
<dbReference type="InterPro" id="IPR000836">
    <property type="entry name" value="PRibTrfase_dom"/>
</dbReference>
<dbReference type="InterPro" id="IPR029057">
    <property type="entry name" value="PRTase-like"/>
</dbReference>
<dbReference type="InterPro" id="IPR005854">
    <property type="entry name" value="PurF"/>
</dbReference>
<dbReference type="InterPro" id="IPR035584">
    <property type="entry name" value="PurF_N"/>
</dbReference>
<dbReference type="NCBIfam" id="TIGR01134">
    <property type="entry name" value="purF"/>
    <property type="match status" value="1"/>
</dbReference>
<dbReference type="PANTHER" id="PTHR11907">
    <property type="entry name" value="AMIDOPHOSPHORIBOSYLTRANSFERASE"/>
    <property type="match status" value="1"/>
</dbReference>
<dbReference type="Pfam" id="PF13537">
    <property type="entry name" value="GATase_7"/>
    <property type="match status" value="1"/>
</dbReference>
<dbReference type="Pfam" id="PF00156">
    <property type="entry name" value="Pribosyltran"/>
    <property type="match status" value="1"/>
</dbReference>
<dbReference type="PIRSF" id="PIRSF000485">
    <property type="entry name" value="Amd_phspho_trans"/>
    <property type="match status" value="1"/>
</dbReference>
<dbReference type="SUPFAM" id="SSF56235">
    <property type="entry name" value="N-terminal nucleophile aminohydrolases (Ntn hydrolases)"/>
    <property type="match status" value="1"/>
</dbReference>
<dbReference type="SUPFAM" id="SSF53271">
    <property type="entry name" value="PRTase-like"/>
    <property type="match status" value="1"/>
</dbReference>
<dbReference type="PROSITE" id="PS51278">
    <property type="entry name" value="GATASE_TYPE_2"/>
    <property type="match status" value="1"/>
</dbReference>
<dbReference type="PROSITE" id="PS00103">
    <property type="entry name" value="PUR_PYR_PR_TRANSFER"/>
    <property type="match status" value="1"/>
</dbReference>
<gene>
    <name type="primary">ASE3</name>
    <name type="synonym">GPRAT3</name>
    <name type="ordered locus">At4g38880</name>
    <name type="ORF">F19H22.3</name>
    <name type="ORF">T9A14</name>
</gene>
<reference key="1">
    <citation type="journal article" date="1999" name="Nature">
        <title>Sequence and analysis of chromosome 4 of the plant Arabidopsis thaliana.</title>
        <authorList>
            <person name="Mayer K.F.X."/>
            <person name="Schueller C."/>
            <person name="Wambutt R."/>
            <person name="Murphy G."/>
            <person name="Volckaert G."/>
            <person name="Pohl T."/>
            <person name="Duesterhoeft A."/>
            <person name="Stiekema W."/>
            <person name="Entian K.-D."/>
            <person name="Terryn N."/>
            <person name="Harris B."/>
            <person name="Ansorge W."/>
            <person name="Brandt P."/>
            <person name="Grivell L.A."/>
            <person name="Rieger M."/>
            <person name="Weichselgartner M."/>
            <person name="de Simone V."/>
            <person name="Obermaier B."/>
            <person name="Mache R."/>
            <person name="Mueller M."/>
            <person name="Kreis M."/>
            <person name="Delseny M."/>
            <person name="Puigdomenech P."/>
            <person name="Watson M."/>
            <person name="Schmidtheini T."/>
            <person name="Reichert B."/>
            <person name="Portetelle D."/>
            <person name="Perez-Alonso M."/>
            <person name="Boutry M."/>
            <person name="Bancroft I."/>
            <person name="Vos P."/>
            <person name="Hoheisel J."/>
            <person name="Zimmermann W."/>
            <person name="Wedler H."/>
            <person name="Ridley P."/>
            <person name="Langham S.-A."/>
            <person name="McCullagh B."/>
            <person name="Bilham L."/>
            <person name="Robben J."/>
            <person name="van der Schueren J."/>
            <person name="Grymonprez B."/>
            <person name="Chuang Y.-J."/>
            <person name="Vandenbussche F."/>
            <person name="Braeken M."/>
            <person name="Weltjens I."/>
            <person name="Voet M."/>
            <person name="Bastiaens I."/>
            <person name="Aert R."/>
            <person name="Defoor E."/>
            <person name="Weitzenegger T."/>
            <person name="Bothe G."/>
            <person name="Ramsperger U."/>
            <person name="Hilbert H."/>
            <person name="Braun M."/>
            <person name="Holzer E."/>
            <person name="Brandt A."/>
            <person name="Peters S."/>
            <person name="van Staveren M."/>
            <person name="Dirkse W."/>
            <person name="Mooijman P."/>
            <person name="Klein Lankhorst R."/>
            <person name="Rose M."/>
            <person name="Hauf J."/>
            <person name="Koetter P."/>
            <person name="Berneiser S."/>
            <person name="Hempel S."/>
            <person name="Feldpausch M."/>
            <person name="Lamberth S."/>
            <person name="Van den Daele H."/>
            <person name="De Keyser A."/>
            <person name="Buysshaert C."/>
            <person name="Gielen J."/>
            <person name="Villarroel R."/>
            <person name="De Clercq R."/>
            <person name="van Montagu M."/>
            <person name="Rogers J."/>
            <person name="Cronin A."/>
            <person name="Quail M.A."/>
            <person name="Bray-Allen S."/>
            <person name="Clark L."/>
            <person name="Doggett J."/>
            <person name="Hall S."/>
            <person name="Kay M."/>
            <person name="Lennard N."/>
            <person name="McLay K."/>
            <person name="Mayes R."/>
            <person name="Pettett A."/>
            <person name="Rajandream M.A."/>
            <person name="Lyne M."/>
            <person name="Benes V."/>
            <person name="Rechmann S."/>
            <person name="Borkova D."/>
            <person name="Bloecker H."/>
            <person name="Scharfe M."/>
            <person name="Grimm M."/>
            <person name="Loehnert T.-H."/>
            <person name="Dose S."/>
            <person name="de Haan M."/>
            <person name="Maarse A.C."/>
            <person name="Schaefer M."/>
            <person name="Mueller-Auer S."/>
            <person name="Gabel C."/>
            <person name="Fuchs M."/>
            <person name="Fartmann B."/>
            <person name="Granderath K."/>
            <person name="Dauner D."/>
            <person name="Herzl A."/>
            <person name="Neumann S."/>
            <person name="Argiriou A."/>
            <person name="Vitale D."/>
            <person name="Liguori R."/>
            <person name="Piravandi E."/>
            <person name="Massenet O."/>
            <person name="Quigley F."/>
            <person name="Clabauld G."/>
            <person name="Muendlein A."/>
            <person name="Felber R."/>
            <person name="Schnabl S."/>
            <person name="Hiller R."/>
            <person name="Schmidt W."/>
            <person name="Lecharny A."/>
            <person name="Aubourg S."/>
            <person name="Chefdor F."/>
            <person name="Cooke R."/>
            <person name="Berger C."/>
            <person name="Monfort A."/>
            <person name="Casacuberta E."/>
            <person name="Gibbons T."/>
            <person name="Weber N."/>
            <person name="Vandenbol M."/>
            <person name="Bargues M."/>
            <person name="Terol J."/>
            <person name="Torres A."/>
            <person name="Perez-Perez A."/>
            <person name="Purnelle B."/>
            <person name="Bent E."/>
            <person name="Johnson S."/>
            <person name="Tacon D."/>
            <person name="Jesse T."/>
            <person name="Heijnen L."/>
            <person name="Schwarz S."/>
            <person name="Scholler P."/>
            <person name="Heber S."/>
            <person name="Francs P."/>
            <person name="Bielke C."/>
            <person name="Frishman D."/>
            <person name="Haase D."/>
            <person name="Lemcke K."/>
            <person name="Mewes H.-W."/>
            <person name="Stocker S."/>
            <person name="Zaccaria P."/>
            <person name="Bevan M."/>
            <person name="Wilson R.K."/>
            <person name="de la Bastide M."/>
            <person name="Habermann K."/>
            <person name="Parnell L."/>
            <person name="Dedhia N."/>
            <person name="Gnoj L."/>
            <person name="Schutz K."/>
            <person name="Huang E."/>
            <person name="Spiegel L."/>
            <person name="Sekhon M."/>
            <person name="Murray J."/>
            <person name="Sheet P."/>
            <person name="Cordes M."/>
            <person name="Abu-Threideh J."/>
            <person name="Stoneking T."/>
            <person name="Kalicki J."/>
            <person name="Graves T."/>
            <person name="Harmon G."/>
            <person name="Edwards J."/>
            <person name="Latreille P."/>
            <person name="Courtney L."/>
            <person name="Cloud J."/>
            <person name="Abbott A."/>
            <person name="Scott K."/>
            <person name="Johnson D."/>
            <person name="Minx P."/>
            <person name="Bentley D."/>
            <person name="Fulton B."/>
            <person name="Miller N."/>
            <person name="Greco T."/>
            <person name="Kemp K."/>
            <person name="Kramer J."/>
            <person name="Fulton L."/>
            <person name="Mardis E."/>
            <person name="Dante M."/>
            <person name="Pepin K."/>
            <person name="Hillier L.W."/>
            <person name="Nelson J."/>
            <person name="Spieth J."/>
            <person name="Ryan E."/>
            <person name="Andrews S."/>
            <person name="Geisel C."/>
            <person name="Layman D."/>
            <person name="Du H."/>
            <person name="Ali J."/>
            <person name="Berghoff A."/>
            <person name="Jones K."/>
            <person name="Drone K."/>
            <person name="Cotton M."/>
            <person name="Joshu C."/>
            <person name="Antonoiu B."/>
            <person name="Zidanic M."/>
            <person name="Strong C."/>
            <person name="Sun H."/>
            <person name="Lamar B."/>
            <person name="Yordan C."/>
            <person name="Ma P."/>
            <person name="Zhong J."/>
            <person name="Preston R."/>
            <person name="Vil D."/>
            <person name="Shekher M."/>
            <person name="Matero A."/>
            <person name="Shah R."/>
            <person name="Swaby I.K."/>
            <person name="O'Shaughnessy A."/>
            <person name="Rodriguez M."/>
            <person name="Hoffman J."/>
            <person name="Till S."/>
            <person name="Granat S."/>
            <person name="Shohdy N."/>
            <person name="Hasegawa A."/>
            <person name="Hameed A."/>
            <person name="Lodhi M."/>
            <person name="Johnson A."/>
            <person name="Chen E."/>
            <person name="Marra M.A."/>
            <person name="Martienssen R."/>
            <person name="McCombie W.R."/>
        </authorList>
    </citation>
    <scope>NUCLEOTIDE SEQUENCE [LARGE SCALE GENOMIC DNA]</scope>
    <source>
        <strain>cv. Columbia</strain>
    </source>
</reference>
<reference key="2">
    <citation type="journal article" date="2017" name="Plant J.">
        <title>Araport11: a complete reannotation of the Arabidopsis thaliana reference genome.</title>
        <authorList>
            <person name="Cheng C.Y."/>
            <person name="Krishnakumar V."/>
            <person name="Chan A.P."/>
            <person name="Thibaud-Nissen F."/>
            <person name="Schobel S."/>
            <person name="Town C.D."/>
        </authorList>
    </citation>
    <scope>GENOME REANNOTATION</scope>
    <source>
        <strain>cv. Columbia</strain>
    </source>
</reference>
<reference key="3">
    <citation type="journal article" date="2004" name="Plant Physiol.">
        <title>Characterization of Arabidopsis glutamine phosphoribosyl pyrophosphate amidotransferase-deficient mutants.</title>
        <authorList>
            <person name="Hung W.-F."/>
            <person name="Chen L.-J."/>
            <person name="Boldt R."/>
            <person name="Sun C.-W."/>
            <person name="Li H.-M."/>
        </authorList>
    </citation>
    <scope>TISSUE SPECIFICITY</scope>
    <scope>GENE FAMILY</scope>
    <scope>NOMENCLATURE</scope>
</reference>
<reference key="4">
    <citation type="journal article" date="2007" name="Plant Physiol.">
        <title>Chemical genetic identification of glutamine phosphoribosylpyrophosphate amidotransferase as the target for a novel bleaching herbicide in Arabidopsis.</title>
        <authorList>
            <person name="Walsh T.A."/>
            <person name="Bauer T."/>
            <person name="Neal R."/>
            <person name="Merlo A.O."/>
            <person name="Schmitzer P.R."/>
            <person name="Hicks G.R."/>
            <person name="Honma M."/>
            <person name="Matsumura W."/>
            <person name="Wolff K."/>
            <person name="Davies J.P."/>
        </authorList>
    </citation>
    <scope>FUNCTION</scope>
    <scope>CATALYTIC ACTIVITY</scope>
    <scope>ACTIVITY REGULATION</scope>
    <source>
        <strain>cv. Columbia</strain>
    </source>
</reference>